<gene>
    <name evidence="1" type="primary">proS</name>
    <name type="ordered locus">Psyc_0429</name>
</gene>
<reference key="1">
    <citation type="journal article" date="2010" name="Appl. Environ. Microbiol.">
        <title>The genome sequence of Psychrobacter arcticus 273-4, a psychroactive Siberian permafrost bacterium, reveals mechanisms for adaptation to low-temperature growth.</title>
        <authorList>
            <person name="Ayala-del-Rio H.L."/>
            <person name="Chain P.S."/>
            <person name="Grzymski J.J."/>
            <person name="Ponder M.A."/>
            <person name="Ivanova N."/>
            <person name="Bergholz P.W."/>
            <person name="Di Bartolo G."/>
            <person name="Hauser L."/>
            <person name="Land M."/>
            <person name="Bakermans C."/>
            <person name="Rodrigues D."/>
            <person name="Klappenbach J."/>
            <person name="Zarka D."/>
            <person name="Larimer F."/>
            <person name="Richardson P."/>
            <person name="Murray A."/>
            <person name="Thomashow M."/>
            <person name="Tiedje J.M."/>
        </authorList>
    </citation>
    <scope>NUCLEOTIDE SEQUENCE [LARGE SCALE GENOMIC DNA]</scope>
    <source>
        <strain>DSM 17307 / VKM B-2377 / 273-4</strain>
    </source>
</reference>
<name>SYP_PSYA2</name>
<keyword id="KW-0030">Aminoacyl-tRNA synthetase</keyword>
<keyword id="KW-0067">ATP-binding</keyword>
<keyword id="KW-0963">Cytoplasm</keyword>
<keyword id="KW-0436">Ligase</keyword>
<keyword id="KW-0547">Nucleotide-binding</keyword>
<keyword id="KW-0648">Protein biosynthesis</keyword>
<keyword id="KW-1185">Reference proteome</keyword>
<feature type="chain" id="PRO_0000248751" description="Proline--tRNA ligase">
    <location>
        <begin position="1"/>
        <end position="572"/>
    </location>
</feature>
<accession>Q4FUL6</accession>
<evidence type="ECO:0000255" key="1">
    <source>
        <dbReference type="HAMAP-Rule" id="MF_01569"/>
    </source>
</evidence>
<organism>
    <name type="scientific">Psychrobacter arcticus (strain DSM 17307 / VKM B-2377 / 273-4)</name>
    <dbReference type="NCBI Taxonomy" id="259536"/>
    <lineage>
        <taxon>Bacteria</taxon>
        <taxon>Pseudomonadati</taxon>
        <taxon>Pseudomonadota</taxon>
        <taxon>Gammaproteobacteria</taxon>
        <taxon>Moraxellales</taxon>
        <taxon>Moraxellaceae</taxon>
        <taxon>Psychrobacter</taxon>
    </lineage>
</organism>
<protein>
    <recommendedName>
        <fullName evidence="1">Proline--tRNA ligase</fullName>
        <ecNumber evidence="1">6.1.1.15</ecNumber>
    </recommendedName>
    <alternativeName>
        <fullName evidence="1">Prolyl-tRNA synthetase</fullName>
        <shortName evidence="1">ProRS</shortName>
    </alternativeName>
</protein>
<sequence>MKASQFLFATLKETPSDADIASSQLMVRAGLIRKIASGLYIWLPMGLRVLQKVERIVREEMQNIGAQEVLMPMTQPAELWQMTGRFNDYGPELLRFKDRHDRDFVLGPTHEEVITNLAQGELRSYKQLPITFFQIQNKFRDEIRPRFGVMRAREFTMKDAYSFHVDQASLAKTYDDMYDAYTRIFTRLGLDFRAVQADTGSIGGFASHEFHVLADSGEDDIAFSDSSEYAANVELAESVCTAERQPATMARENVDTVNMPTCEAVAEYLNVELATTVKTLIVQGHTPEGEPQLIAVVLRGDHTLNTIKAEKIEEANVPLTMATEEELKAAGLHKGYIGVELDMPVFVDRAAAALSDFVSGANEVNKHTIGMNWERDANITRIVDIRNVNQGDPSPDGKGTLQIKRGIEVGHIFQLGNKYSQAMNCTVSGDDGKPVTLMMGCYGIGVSRIIAAAIEQNNDENGIMWPLTPNISDSLAPFEVAIVPMKSKEETVMQTATALYDELKALGVNVLLDDRNERPGVKFADLELIGIPHRIVVSDRNLAEDKYEYINRRDTEKQLLSRDEVLAKVSSK</sequence>
<dbReference type="EC" id="6.1.1.15" evidence="1"/>
<dbReference type="EMBL" id="CP000082">
    <property type="protein sequence ID" value="AAZ18292.1"/>
    <property type="molecule type" value="Genomic_DNA"/>
</dbReference>
<dbReference type="RefSeq" id="WP_011279728.1">
    <property type="nucleotide sequence ID" value="NC_007204.1"/>
</dbReference>
<dbReference type="SMR" id="Q4FUL6"/>
<dbReference type="STRING" id="259536.Psyc_0429"/>
<dbReference type="KEGG" id="par:Psyc_0429"/>
<dbReference type="eggNOG" id="COG0442">
    <property type="taxonomic scope" value="Bacteria"/>
</dbReference>
<dbReference type="HOGENOM" id="CLU_016739_0_0_6"/>
<dbReference type="OrthoDB" id="9809052at2"/>
<dbReference type="Proteomes" id="UP000000546">
    <property type="component" value="Chromosome"/>
</dbReference>
<dbReference type="GO" id="GO:0005829">
    <property type="term" value="C:cytosol"/>
    <property type="evidence" value="ECO:0007669"/>
    <property type="project" value="TreeGrafter"/>
</dbReference>
<dbReference type="GO" id="GO:0002161">
    <property type="term" value="F:aminoacyl-tRNA deacylase activity"/>
    <property type="evidence" value="ECO:0007669"/>
    <property type="project" value="InterPro"/>
</dbReference>
<dbReference type="GO" id="GO:0005524">
    <property type="term" value="F:ATP binding"/>
    <property type="evidence" value="ECO:0007669"/>
    <property type="project" value="UniProtKB-UniRule"/>
</dbReference>
<dbReference type="GO" id="GO:0004827">
    <property type="term" value="F:proline-tRNA ligase activity"/>
    <property type="evidence" value="ECO:0007669"/>
    <property type="project" value="UniProtKB-UniRule"/>
</dbReference>
<dbReference type="GO" id="GO:0006433">
    <property type="term" value="P:prolyl-tRNA aminoacylation"/>
    <property type="evidence" value="ECO:0007669"/>
    <property type="project" value="UniProtKB-UniRule"/>
</dbReference>
<dbReference type="CDD" id="cd04334">
    <property type="entry name" value="ProRS-INS"/>
    <property type="match status" value="1"/>
</dbReference>
<dbReference type="CDD" id="cd00861">
    <property type="entry name" value="ProRS_anticodon_short"/>
    <property type="match status" value="1"/>
</dbReference>
<dbReference type="CDD" id="cd00779">
    <property type="entry name" value="ProRS_core_prok"/>
    <property type="match status" value="1"/>
</dbReference>
<dbReference type="FunFam" id="3.30.930.10:FF:000012">
    <property type="entry name" value="Proline--tRNA ligase"/>
    <property type="match status" value="1"/>
</dbReference>
<dbReference type="Gene3D" id="3.40.50.800">
    <property type="entry name" value="Anticodon-binding domain"/>
    <property type="match status" value="1"/>
</dbReference>
<dbReference type="Gene3D" id="3.30.930.10">
    <property type="entry name" value="Bira Bifunctional Protein, Domain 2"/>
    <property type="match status" value="2"/>
</dbReference>
<dbReference type="HAMAP" id="MF_01569">
    <property type="entry name" value="Pro_tRNA_synth_type1"/>
    <property type="match status" value="1"/>
</dbReference>
<dbReference type="InterPro" id="IPR002314">
    <property type="entry name" value="aa-tRNA-synt_IIb"/>
</dbReference>
<dbReference type="InterPro" id="IPR006195">
    <property type="entry name" value="aa-tRNA-synth_II"/>
</dbReference>
<dbReference type="InterPro" id="IPR045864">
    <property type="entry name" value="aa-tRNA-synth_II/BPL/LPL"/>
</dbReference>
<dbReference type="InterPro" id="IPR004154">
    <property type="entry name" value="Anticodon-bd"/>
</dbReference>
<dbReference type="InterPro" id="IPR036621">
    <property type="entry name" value="Anticodon-bd_dom_sf"/>
</dbReference>
<dbReference type="InterPro" id="IPR002316">
    <property type="entry name" value="Pro-tRNA-ligase_IIa"/>
</dbReference>
<dbReference type="InterPro" id="IPR004500">
    <property type="entry name" value="Pro-tRNA-synth_IIa_bac-type"/>
</dbReference>
<dbReference type="InterPro" id="IPR023717">
    <property type="entry name" value="Pro-tRNA-Synthase_IIa_type1"/>
</dbReference>
<dbReference type="InterPro" id="IPR050062">
    <property type="entry name" value="Pro-tRNA_synthetase"/>
</dbReference>
<dbReference type="InterPro" id="IPR044140">
    <property type="entry name" value="ProRS_anticodon_short"/>
</dbReference>
<dbReference type="InterPro" id="IPR033730">
    <property type="entry name" value="ProRS_core_prok"/>
</dbReference>
<dbReference type="InterPro" id="IPR036754">
    <property type="entry name" value="YbaK/aa-tRNA-synt-asso_dom_sf"/>
</dbReference>
<dbReference type="InterPro" id="IPR007214">
    <property type="entry name" value="YbaK/aa-tRNA-synth-assoc-dom"/>
</dbReference>
<dbReference type="NCBIfam" id="NF006625">
    <property type="entry name" value="PRK09194.1"/>
    <property type="match status" value="1"/>
</dbReference>
<dbReference type="NCBIfam" id="TIGR00409">
    <property type="entry name" value="proS_fam_II"/>
    <property type="match status" value="1"/>
</dbReference>
<dbReference type="PANTHER" id="PTHR42753">
    <property type="entry name" value="MITOCHONDRIAL RIBOSOME PROTEIN L39/PROLYL-TRNA LIGASE FAMILY MEMBER"/>
    <property type="match status" value="1"/>
</dbReference>
<dbReference type="PANTHER" id="PTHR42753:SF2">
    <property type="entry name" value="PROLINE--TRNA LIGASE"/>
    <property type="match status" value="1"/>
</dbReference>
<dbReference type="Pfam" id="PF03129">
    <property type="entry name" value="HGTP_anticodon"/>
    <property type="match status" value="1"/>
</dbReference>
<dbReference type="Pfam" id="PF00587">
    <property type="entry name" value="tRNA-synt_2b"/>
    <property type="match status" value="1"/>
</dbReference>
<dbReference type="Pfam" id="PF04073">
    <property type="entry name" value="tRNA_edit"/>
    <property type="match status" value="1"/>
</dbReference>
<dbReference type="PRINTS" id="PR01046">
    <property type="entry name" value="TRNASYNTHPRO"/>
</dbReference>
<dbReference type="SUPFAM" id="SSF52954">
    <property type="entry name" value="Class II aaRS ABD-related"/>
    <property type="match status" value="1"/>
</dbReference>
<dbReference type="SUPFAM" id="SSF55681">
    <property type="entry name" value="Class II aaRS and biotin synthetases"/>
    <property type="match status" value="1"/>
</dbReference>
<dbReference type="SUPFAM" id="SSF55826">
    <property type="entry name" value="YbaK/ProRS associated domain"/>
    <property type="match status" value="1"/>
</dbReference>
<dbReference type="PROSITE" id="PS50862">
    <property type="entry name" value="AA_TRNA_LIGASE_II"/>
    <property type="match status" value="1"/>
</dbReference>
<proteinExistence type="inferred from homology"/>
<comment type="function">
    <text evidence="1">Catalyzes the attachment of proline to tRNA(Pro) in a two-step reaction: proline is first activated by ATP to form Pro-AMP and then transferred to the acceptor end of tRNA(Pro). As ProRS can inadvertently accommodate and process non-cognate amino acids such as alanine and cysteine, to avoid such errors it has two additional distinct editing activities against alanine. One activity is designated as 'pretransfer' editing and involves the tRNA(Pro)-independent hydrolysis of activated Ala-AMP. The other activity is designated 'posttransfer' editing and involves deacylation of mischarged Ala-tRNA(Pro). The misacylated Cys-tRNA(Pro) is not edited by ProRS.</text>
</comment>
<comment type="catalytic activity">
    <reaction evidence="1">
        <text>tRNA(Pro) + L-proline + ATP = L-prolyl-tRNA(Pro) + AMP + diphosphate</text>
        <dbReference type="Rhea" id="RHEA:14305"/>
        <dbReference type="Rhea" id="RHEA-COMP:9700"/>
        <dbReference type="Rhea" id="RHEA-COMP:9702"/>
        <dbReference type="ChEBI" id="CHEBI:30616"/>
        <dbReference type="ChEBI" id="CHEBI:33019"/>
        <dbReference type="ChEBI" id="CHEBI:60039"/>
        <dbReference type="ChEBI" id="CHEBI:78442"/>
        <dbReference type="ChEBI" id="CHEBI:78532"/>
        <dbReference type="ChEBI" id="CHEBI:456215"/>
        <dbReference type="EC" id="6.1.1.15"/>
    </reaction>
</comment>
<comment type="subunit">
    <text evidence="1">Homodimer.</text>
</comment>
<comment type="subcellular location">
    <subcellularLocation>
        <location evidence="1">Cytoplasm</location>
    </subcellularLocation>
</comment>
<comment type="domain">
    <text evidence="1">Consists of three domains: the N-terminal catalytic domain, the editing domain and the C-terminal anticodon-binding domain.</text>
</comment>
<comment type="similarity">
    <text evidence="1">Belongs to the class-II aminoacyl-tRNA synthetase family. ProS type 1 subfamily.</text>
</comment>